<reference key="1">
    <citation type="submission" date="2007-05" db="EMBL/GenBank/DDBJ databases">
        <title>Complete sequence of Dehalococcoides sp. BAV1.</title>
        <authorList>
            <consortium name="US DOE Joint Genome Institute"/>
            <person name="Copeland A."/>
            <person name="Lucas S."/>
            <person name="Lapidus A."/>
            <person name="Barry K."/>
            <person name="Detter J.C."/>
            <person name="Glavina del Rio T."/>
            <person name="Hammon N."/>
            <person name="Israni S."/>
            <person name="Pitluck S."/>
            <person name="Lowry S."/>
            <person name="Clum A."/>
            <person name="Schmutz J."/>
            <person name="Larimer F."/>
            <person name="Land M."/>
            <person name="Hauser L."/>
            <person name="Kyrpides N."/>
            <person name="Kim E."/>
            <person name="Ritalahti K.M."/>
            <person name="Loeffler F."/>
            <person name="Richardson P."/>
        </authorList>
    </citation>
    <scope>NUCLEOTIDE SEQUENCE [LARGE SCALE GENOMIC DNA]</scope>
    <source>
        <strain>ATCC BAA-2100 / JCM 16839 / KCTC 5957 / BAV1</strain>
    </source>
</reference>
<name>LEPA_DEHMB</name>
<accession>A5FR18</accession>
<comment type="function">
    <text evidence="1">Required for accurate and efficient protein synthesis under certain stress conditions. May act as a fidelity factor of the translation reaction, by catalyzing a one-codon backward translocation of tRNAs on improperly translocated ribosomes. Back-translocation proceeds from a post-translocation (POST) complex to a pre-translocation (PRE) complex, thus giving elongation factor G a second chance to translocate the tRNAs correctly. Binds to ribosomes in a GTP-dependent manner.</text>
</comment>
<comment type="catalytic activity">
    <reaction evidence="1">
        <text>GTP + H2O = GDP + phosphate + H(+)</text>
        <dbReference type="Rhea" id="RHEA:19669"/>
        <dbReference type="ChEBI" id="CHEBI:15377"/>
        <dbReference type="ChEBI" id="CHEBI:15378"/>
        <dbReference type="ChEBI" id="CHEBI:37565"/>
        <dbReference type="ChEBI" id="CHEBI:43474"/>
        <dbReference type="ChEBI" id="CHEBI:58189"/>
        <dbReference type="EC" id="3.6.5.n1"/>
    </reaction>
</comment>
<comment type="subcellular location">
    <subcellularLocation>
        <location evidence="1">Cell membrane</location>
        <topology evidence="1">Peripheral membrane protein</topology>
        <orientation evidence="1">Cytoplasmic side</orientation>
    </subcellularLocation>
</comment>
<comment type="similarity">
    <text evidence="1">Belongs to the TRAFAC class translation factor GTPase superfamily. Classic translation factor GTPase family. LepA subfamily.</text>
</comment>
<protein>
    <recommendedName>
        <fullName evidence="1">Elongation factor 4</fullName>
        <shortName evidence="1">EF-4</shortName>
        <ecNumber evidence="1">3.6.5.n1</ecNumber>
    </recommendedName>
    <alternativeName>
        <fullName evidence="1">Ribosomal back-translocase LepA</fullName>
    </alternativeName>
</protein>
<sequence>MSQSSVRNFCIIAHIDHGKSTLADRLIEMTGTLRHDEMCEQVMDSMELERERGITIKAKAIRLRYISKDKQEYRLNLIDTPGHVDFSYEVSRTIAACEGAILVIDATQGIQAQTLANVYLAIEYNLEIIPVINKIDLPGADIPRVMGEIKSVLGYDEDSVLQISAKLGLGVPELLEAIVNKVPAPKGNANQPLRALIFDSHYDPYKGVVAYLRVADGNINKGDDLRLMGQGTEFRVLEAGYFAPAQVAALRLDVGDVGYIATGLKSVGECRVGDTVTLQHGGAIQPLIGYHPAKAMVFAGIYPTQTDDYHELREAMEKLSLNDASLSSEPESSPLLGHGFRCGFLGLLHLDIIVERLEREFNLSLVVTSPGVSLTVTRIGGEAFTVVNPNEMPLPHEIARIEEPWVSVVIITPSKYIGTVMDLVRENYGVYKNTEYLGQLAMSELGQRVQLHYDMPLRSILTTFHDQLKSRTQGYASLDYEFIGYRDANLSKIDVLVNDVPVDAFSRIIPPDKAHEIGEALVKKLKEMIPRQLYQVTLQAAIGSKIVARADISAKRKDVIAKCYGGDITRKRKLLDKQKEGKKKMRQIGKVEVPKEAFLSVLKLQ</sequence>
<keyword id="KW-1003">Cell membrane</keyword>
<keyword id="KW-0342">GTP-binding</keyword>
<keyword id="KW-0378">Hydrolase</keyword>
<keyword id="KW-0472">Membrane</keyword>
<keyword id="KW-0547">Nucleotide-binding</keyword>
<keyword id="KW-0648">Protein biosynthesis</keyword>
<feature type="chain" id="PRO_1000075130" description="Elongation factor 4">
    <location>
        <begin position="1"/>
        <end position="605"/>
    </location>
</feature>
<feature type="domain" description="tr-type G">
    <location>
        <begin position="4"/>
        <end position="186"/>
    </location>
</feature>
<feature type="binding site" evidence="1">
    <location>
        <begin position="16"/>
        <end position="21"/>
    </location>
    <ligand>
        <name>GTP</name>
        <dbReference type="ChEBI" id="CHEBI:37565"/>
    </ligand>
</feature>
<feature type="binding site" evidence="1">
    <location>
        <begin position="133"/>
        <end position="136"/>
    </location>
    <ligand>
        <name>GTP</name>
        <dbReference type="ChEBI" id="CHEBI:37565"/>
    </ligand>
</feature>
<dbReference type="EC" id="3.6.5.n1" evidence="1"/>
<dbReference type="EMBL" id="CP000688">
    <property type="protein sequence ID" value="ABQ17360.1"/>
    <property type="molecule type" value="Genomic_DNA"/>
</dbReference>
<dbReference type="SMR" id="A5FR18"/>
<dbReference type="KEGG" id="deb:DehaBAV1_0777"/>
<dbReference type="PATRIC" id="fig|216389.18.peg.826"/>
<dbReference type="HOGENOM" id="CLU_009995_3_3_0"/>
<dbReference type="GO" id="GO:0005886">
    <property type="term" value="C:plasma membrane"/>
    <property type="evidence" value="ECO:0007669"/>
    <property type="project" value="UniProtKB-SubCell"/>
</dbReference>
<dbReference type="GO" id="GO:0005525">
    <property type="term" value="F:GTP binding"/>
    <property type="evidence" value="ECO:0007669"/>
    <property type="project" value="UniProtKB-UniRule"/>
</dbReference>
<dbReference type="GO" id="GO:0003924">
    <property type="term" value="F:GTPase activity"/>
    <property type="evidence" value="ECO:0007669"/>
    <property type="project" value="UniProtKB-UniRule"/>
</dbReference>
<dbReference type="GO" id="GO:0043022">
    <property type="term" value="F:ribosome binding"/>
    <property type="evidence" value="ECO:0007669"/>
    <property type="project" value="UniProtKB-UniRule"/>
</dbReference>
<dbReference type="GO" id="GO:0003746">
    <property type="term" value="F:translation elongation factor activity"/>
    <property type="evidence" value="ECO:0007669"/>
    <property type="project" value="UniProtKB-UniRule"/>
</dbReference>
<dbReference type="GO" id="GO:0045727">
    <property type="term" value="P:positive regulation of translation"/>
    <property type="evidence" value="ECO:0007669"/>
    <property type="project" value="UniProtKB-UniRule"/>
</dbReference>
<dbReference type="CDD" id="cd03699">
    <property type="entry name" value="EF4_II"/>
    <property type="match status" value="1"/>
</dbReference>
<dbReference type="CDD" id="cd01890">
    <property type="entry name" value="LepA"/>
    <property type="match status" value="1"/>
</dbReference>
<dbReference type="CDD" id="cd03709">
    <property type="entry name" value="lepA_C"/>
    <property type="match status" value="1"/>
</dbReference>
<dbReference type="FunFam" id="3.40.50.300:FF:000078">
    <property type="entry name" value="Elongation factor 4"/>
    <property type="match status" value="1"/>
</dbReference>
<dbReference type="FunFam" id="2.40.30.10:FF:000015">
    <property type="entry name" value="Translation factor GUF1, mitochondrial"/>
    <property type="match status" value="1"/>
</dbReference>
<dbReference type="FunFam" id="3.30.70.2570:FF:000001">
    <property type="entry name" value="Translation factor GUF1, mitochondrial"/>
    <property type="match status" value="1"/>
</dbReference>
<dbReference type="FunFam" id="3.30.70.870:FF:000004">
    <property type="entry name" value="Translation factor GUF1, mitochondrial"/>
    <property type="match status" value="1"/>
</dbReference>
<dbReference type="Gene3D" id="3.30.70.240">
    <property type="match status" value="1"/>
</dbReference>
<dbReference type="Gene3D" id="3.30.70.2570">
    <property type="entry name" value="Elongation factor 4, C-terminal domain"/>
    <property type="match status" value="1"/>
</dbReference>
<dbReference type="Gene3D" id="3.30.70.870">
    <property type="entry name" value="Elongation Factor G (Translational Gtpase), domain 3"/>
    <property type="match status" value="1"/>
</dbReference>
<dbReference type="Gene3D" id="3.40.50.300">
    <property type="entry name" value="P-loop containing nucleotide triphosphate hydrolases"/>
    <property type="match status" value="1"/>
</dbReference>
<dbReference type="Gene3D" id="2.40.30.10">
    <property type="entry name" value="Translation factors"/>
    <property type="match status" value="1"/>
</dbReference>
<dbReference type="HAMAP" id="MF_00071">
    <property type="entry name" value="LepA"/>
    <property type="match status" value="1"/>
</dbReference>
<dbReference type="InterPro" id="IPR006297">
    <property type="entry name" value="EF-4"/>
</dbReference>
<dbReference type="InterPro" id="IPR035647">
    <property type="entry name" value="EFG_III/V"/>
</dbReference>
<dbReference type="InterPro" id="IPR000640">
    <property type="entry name" value="EFG_V-like"/>
</dbReference>
<dbReference type="InterPro" id="IPR031157">
    <property type="entry name" value="G_TR_CS"/>
</dbReference>
<dbReference type="InterPro" id="IPR038363">
    <property type="entry name" value="LepA_C_sf"/>
</dbReference>
<dbReference type="InterPro" id="IPR013842">
    <property type="entry name" value="LepA_CTD"/>
</dbReference>
<dbReference type="InterPro" id="IPR035654">
    <property type="entry name" value="LepA_IV"/>
</dbReference>
<dbReference type="InterPro" id="IPR027417">
    <property type="entry name" value="P-loop_NTPase"/>
</dbReference>
<dbReference type="InterPro" id="IPR005225">
    <property type="entry name" value="Small_GTP-bd"/>
</dbReference>
<dbReference type="InterPro" id="IPR000795">
    <property type="entry name" value="T_Tr_GTP-bd_dom"/>
</dbReference>
<dbReference type="InterPro" id="IPR009000">
    <property type="entry name" value="Transl_B-barrel_sf"/>
</dbReference>
<dbReference type="NCBIfam" id="TIGR01393">
    <property type="entry name" value="lepA"/>
    <property type="match status" value="1"/>
</dbReference>
<dbReference type="NCBIfam" id="TIGR00231">
    <property type="entry name" value="small_GTP"/>
    <property type="match status" value="1"/>
</dbReference>
<dbReference type="PANTHER" id="PTHR43512:SF4">
    <property type="entry name" value="TRANSLATION FACTOR GUF1 HOMOLOG, CHLOROPLASTIC"/>
    <property type="match status" value="1"/>
</dbReference>
<dbReference type="PANTHER" id="PTHR43512">
    <property type="entry name" value="TRANSLATION FACTOR GUF1-RELATED"/>
    <property type="match status" value="1"/>
</dbReference>
<dbReference type="Pfam" id="PF00679">
    <property type="entry name" value="EFG_C"/>
    <property type="match status" value="1"/>
</dbReference>
<dbReference type="Pfam" id="PF00009">
    <property type="entry name" value="GTP_EFTU"/>
    <property type="match status" value="1"/>
</dbReference>
<dbReference type="Pfam" id="PF06421">
    <property type="entry name" value="LepA_C"/>
    <property type="match status" value="1"/>
</dbReference>
<dbReference type="PRINTS" id="PR00315">
    <property type="entry name" value="ELONGATNFCT"/>
</dbReference>
<dbReference type="SUPFAM" id="SSF54980">
    <property type="entry name" value="EF-G C-terminal domain-like"/>
    <property type="match status" value="2"/>
</dbReference>
<dbReference type="SUPFAM" id="SSF52540">
    <property type="entry name" value="P-loop containing nucleoside triphosphate hydrolases"/>
    <property type="match status" value="1"/>
</dbReference>
<dbReference type="SUPFAM" id="SSF50447">
    <property type="entry name" value="Translation proteins"/>
    <property type="match status" value="1"/>
</dbReference>
<dbReference type="PROSITE" id="PS00301">
    <property type="entry name" value="G_TR_1"/>
    <property type="match status" value="1"/>
</dbReference>
<dbReference type="PROSITE" id="PS51722">
    <property type="entry name" value="G_TR_2"/>
    <property type="match status" value="1"/>
</dbReference>
<evidence type="ECO:0000255" key="1">
    <source>
        <dbReference type="HAMAP-Rule" id="MF_00071"/>
    </source>
</evidence>
<organism>
    <name type="scientific">Dehalococcoides mccartyi (strain ATCC BAA-2100 / JCM 16839 / KCTC 5957 / BAV1)</name>
    <dbReference type="NCBI Taxonomy" id="216389"/>
    <lineage>
        <taxon>Bacteria</taxon>
        <taxon>Bacillati</taxon>
        <taxon>Chloroflexota</taxon>
        <taxon>Dehalococcoidia</taxon>
        <taxon>Dehalococcoidales</taxon>
        <taxon>Dehalococcoidaceae</taxon>
        <taxon>Dehalococcoides</taxon>
    </lineage>
</organism>
<gene>
    <name evidence="1" type="primary">lepA</name>
    <name type="ordered locus">DehaBAV1_0777</name>
</gene>
<proteinExistence type="inferred from homology"/>